<dbReference type="EMBL" id="CP000764">
    <property type="protein sequence ID" value="ABS22712.1"/>
    <property type="molecule type" value="Genomic_DNA"/>
</dbReference>
<dbReference type="RefSeq" id="WP_012094916.1">
    <property type="nucleotide sequence ID" value="NC_009674.1"/>
</dbReference>
<dbReference type="SMR" id="A7GRF4"/>
<dbReference type="STRING" id="315749.Bcer98_2476"/>
<dbReference type="GeneID" id="33897731"/>
<dbReference type="KEGG" id="bcy:Bcer98_2476"/>
<dbReference type="eggNOG" id="COG0233">
    <property type="taxonomic scope" value="Bacteria"/>
</dbReference>
<dbReference type="HOGENOM" id="CLU_073981_2_0_9"/>
<dbReference type="OrthoDB" id="9804006at2"/>
<dbReference type="Proteomes" id="UP000002300">
    <property type="component" value="Chromosome"/>
</dbReference>
<dbReference type="GO" id="GO:0005737">
    <property type="term" value="C:cytoplasm"/>
    <property type="evidence" value="ECO:0007669"/>
    <property type="project" value="UniProtKB-SubCell"/>
</dbReference>
<dbReference type="GO" id="GO:0043023">
    <property type="term" value="F:ribosomal large subunit binding"/>
    <property type="evidence" value="ECO:0007669"/>
    <property type="project" value="TreeGrafter"/>
</dbReference>
<dbReference type="GO" id="GO:0006415">
    <property type="term" value="P:translational termination"/>
    <property type="evidence" value="ECO:0007669"/>
    <property type="project" value="UniProtKB-UniRule"/>
</dbReference>
<dbReference type="CDD" id="cd00520">
    <property type="entry name" value="RRF"/>
    <property type="match status" value="1"/>
</dbReference>
<dbReference type="FunFam" id="1.10.132.20:FF:000001">
    <property type="entry name" value="Ribosome-recycling factor"/>
    <property type="match status" value="1"/>
</dbReference>
<dbReference type="FunFam" id="3.30.1360.40:FF:000001">
    <property type="entry name" value="Ribosome-recycling factor"/>
    <property type="match status" value="1"/>
</dbReference>
<dbReference type="Gene3D" id="3.30.1360.40">
    <property type="match status" value="1"/>
</dbReference>
<dbReference type="Gene3D" id="1.10.132.20">
    <property type="entry name" value="Ribosome-recycling factor"/>
    <property type="match status" value="1"/>
</dbReference>
<dbReference type="HAMAP" id="MF_00040">
    <property type="entry name" value="RRF"/>
    <property type="match status" value="1"/>
</dbReference>
<dbReference type="InterPro" id="IPR002661">
    <property type="entry name" value="Ribosome_recyc_fac"/>
</dbReference>
<dbReference type="InterPro" id="IPR023584">
    <property type="entry name" value="Ribosome_recyc_fac_dom"/>
</dbReference>
<dbReference type="InterPro" id="IPR036191">
    <property type="entry name" value="RRF_sf"/>
</dbReference>
<dbReference type="NCBIfam" id="TIGR00496">
    <property type="entry name" value="frr"/>
    <property type="match status" value="1"/>
</dbReference>
<dbReference type="PANTHER" id="PTHR20982:SF3">
    <property type="entry name" value="MITOCHONDRIAL RIBOSOME RECYCLING FACTOR PSEUDO 1"/>
    <property type="match status" value="1"/>
</dbReference>
<dbReference type="PANTHER" id="PTHR20982">
    <property type="entry name" value="RIBOSOME RECYCLING FACTOR"/>
    <property type="match status" value="1"/>
</dbReference>
<dbReference type="Pfam" id="PF01765">
    <property type="entry name" value="RRF"/>
    <property type="match status" value="1"/>
</dbReference>
<dbReference type="SUPFAM" id="SSF55194">
    <property type="entry name" value="Ribosome recycling factor, RRF"/>
    <property type="match status" value="1"/>
</dbReference>
<reference key="1">
    <citation type="journal article" date="2008" name="Chem. Biol. Interact.">
        <title>Extending the Bacillus cereus group genomics to putative food-borne pathogens of different toxicity.</title>
        <authorList>
            <person name="Lapidus A."/>
            <person name="Goltsman E."/>
            <person name="Auger S."/>
            <person name="Galleron N."/>
            <person name="Segurens B."/>
            <person name="Dossat C."/>
            <person name="Land M.L."/>
            <person name="Broussolle V."/>
            <person name="Brillard J."/>
            <person name="Guinebretiere M.-H."/>
            <person name="Sanchis V."/>
            <person name="Nguen-the C."/>
            <person name="Lereclus D."/>
            <person name="Richardson P."/>
            <person name="Wincker P."/>
            <person name="Weissenbach J."/>
            <person name="Ehrlich S.D."/>
            <person name="Sorokin A."/>
        </authorList>
    </citation>
    <scope>NUCLEOTIDE SEQUENCE [LARGE SCALE GENOMIC DNA]</scope>
    <source>
        <strain>DSM 22905 / CIP 110041 / 391-98 / NVH 391-98</strain>
    </source>
</reference>
<evidence type="ECO:0000255" key="1">
    <source>
        <dbReference type="HAMAP-Rule" id="MF_00040"/>
    </source>
</evidence>
<feature type="chain" id="PRO_1000074569" description="Ribosome-recycling factor">
    <location>
        <begin position="1"/>
        <end position="185"/>
    </location>
</feature>
<sequence length="185" mass="20653">MGQQVIKSSTEKMEKAVAAYSRELATVRAGRASASILDKVQVDYYGAPTPVVQLANITVPEARLLVIQPYDKTSIGDIEKAILKADLGLNPSNDGSVIRIAFPALTEERRRELVKVVKKYAEDAKVAIRNVRRDGNDELKKLEKAGEMTEDDLRGYTEDIQKETDKYIAKVDEIAKNKEQEIMEV</sequence>
<accession>A7GRF4</accession>
<name>RRF_BACCN</name>
<organism>
    <name type="scientific">Bacillus cytotoxicus (strain DSM 22905 / CIP 110041 / 391-98 / NVH 391-98)</name>
    <dbReference type="NCBI Taxonomy" id="315749"/>
    <lineage>
        <taxon>Bacteria</taxon>
        <taxon>Bacillati</taxon>
        <taxon>Bacillota</taxon>
        <taxon>Bacilli</taxon>
        <taxon>Bacillales</taxon>
        <taxon>Bacillaceae</taxon>
        <taxon>Bacillus</taxon>
        <taxon>Bacillus cereus group</taxon>
    </lineage>
</organism>
<proteinExistence type="inferred from homology"/>
<comment type="function">
    <text evidence="1">Responsible for the release of ribosomes from messenger RNA at the termination of protein biosynthesis. May increase the efficiency of translation by recycling ribosomes from one round of translation to another.</text>
</comment>
<comment type="subcellular location">
    <subcellularLocation>
        <location evidence="1">Cytoplasm</location>
    </subcellularLocation>
</comment>
<comment type="similarity">
    <text evidence="1">Belongs to the RRF family.</text>
</comment>
<keyword id="KW-0963">Cytoplasm</keyword>
<keyword id="KW-0648">Protein biosynthesis</keyword>
<protein>
    <recommendedName>
        <fullName evidence="1">Ribosome-recycling factor</fullName>
        <shortName evidence="1">RRF</shortName>
    </recommendedName>
    <alternativeName>
        <fullName evidence="1">Ribosome-releasing factor</fullName>
    </alternativeName>
</protein>
<gene>
    <name evidence="1" type="primary">frr</name>
    <name type="ordered locus">Bcer98_2476</name>
</gene>